<feature type="chain" id="PRO_0000137876" description="Adenylosuccinate lyase">
    <location>
        <begin position="1"/>
        <end position="460"/>
    </location>
</feature>
<feature type="active site" description="Proton donor/acceptor" evidence="2">
    <location>
        <position position="169"/>
    </location>
</feature>
<feature type="active site" description="Proton donor/acceptor" evidence="2">
    <location>
        <position position="293"/>
    </location>
</feature>
<feature type="binding site" evidence="2">
    <location>
        <begin position="15"/>
        <end position="16"/>
    </location>
    <ligand>
        <name>N(6)-(1,2-dicarboxyethyl)-AMP</name>
        <dbReference type="ChEBI" id="CHEBI:57567"/>
    </ligand>
</feature>
<feature type="binding site" evidence="2">
    <location>
        <begin position="88"/>
        <end position="90"/>
    </location>
    <ligand>
        <name>N(6)-(1,2-dicarboxyethyl)-AMP</name>
        <dbReference type="ChEBI" id="CHEBI:57567"/>
    </ligand>
</feature>
<feature type="binding site" evidence="2">
    <location>
        <begin position="120"/>
        <end position="121"/>
    </location>
    <ligand>
        <name>N(6)-(1,2-dicarboxyethyl)-AMP</name>
        <dbReference type="ChEBI" id="CHEBI:57567"/>
    </ligand>
</feature>
<feature type="binding site" evidence="2">
    <location>
        <position position="245"/>
    </location>
    <ligand>
        <name>N(6)-(1,2-dicarboxyethyl)-AMP</name>
        <dbReference type="ChEBI" id="CHEBI:57567"/>
    </ligand>
</feature>
<feature type="binding site" evidence="2">
    <location>
        <position position="294"/>
    </location>
    <ligand>
        <name>N(6)-(1,2-dicarboxyethyl)-AMP</name>
        <dbReference type="ChEBI" id="CHEBI:57567"/>
    </ligand>
</feature>
<feature type="binding site" evidence="2">
    <location>
        <begin position="299"/>
        <end position="301"/>
    </location>
    <ligand>
        <name>N(6)-(1,2-dicarboxyethyl)-AMP</name>
        <dbReference type="ChEBI" id="CHEBI:57567"/>
    </ligand>
</feature>
<feature type="binding site" evidence="2">
    <location>
        <position position="307"/>
    </location>
    <ligand>
        <name>N(6)-(1,2-dicarboxyethyl)-AMP</name>
        <dbReference type="ChEBI" id="CHEBI:57567"/>
    </ligand>
</feature>
<feature type="binding site" evidence="2">
    <location>
        <position position="333"/>
    </location>
    <ligand>
        <name>N(6)-(1,2-dicarboxyethyl)-AMP</name>
        <dbReference type="ChEBI" id="CHEBI:57567"/>
    </ligand>
</feature>
<feature type="binding site" evidence="2">
    <location>
        <begin position="338"/>
        <end position="342"/>
    </location>
    <ligand>
        <name>N(6)-(1,2-dicarboxyethyl)-AMP</name>
        <dbReference type="ChEBI" id="CHEBI:57567"/>
    </ligand>
</feature>
<protein>
    <recommendedName>
        <fullName>Adenylosuccinate lyase</fullName>
        <shortName>ASL</shortName>
        <ecNumber evidence="2">4.3.2.2</ecNumber>
    </recommendedName>
    <alternativeName>
        <fullName>Adenylosuccinase</fullName>
        <shortName>ASase</shortName>
    </alternativeName>
</protein>
<proteinExistence type="inferred from homology"/>
<name>PUR8_BUCBP</name>
<reference key="1">
    <citation type="journal article" date="2003" name="Proc. Natl. Acad. Sci. U.S.A.">
        <title>Reductive genome evolution in Buchnera aphidicola.</title>
        <authorList>
            <person name="van Ham R.C.H.J."/>
            <person name="Kamerbeek J."/>
            <person name="Palacios C."/>
            <person name="Rausell C."/>
            <person name="Abascal F."/>
            <person name="Bastolla U."/>
            <person name="Fernandez J.M."/>
            <person name="Jimenez L."/>
            <person name="Postigo M."/>
            <person name="Silva F.J."/>
            <person name="Tamames J."/>
            <person name="Viguera E."/>
            <person name="Latorre A."/>
            <person name="Valencia A."/>
            <person name="Moran F."/>
            <person name="Moya A."/>
        </authorList>
    </citation>
    <scope>NUCLEOTIDE SEQUENCE [LARGE SCALE GENOMIC DNA]</scope>
    <source>
        <strain>Bp</strain>
    </source>
</reference>
<accession>Q89AM3</accession>
<keyword id="KW-0456">Lyase</keyword>
<keyword id="KW-0658">Purine biosynthesis</keyword>
<keyword id="KW-1185">Reference proteome</keyword>
<evidence type="ECO:0000250" key="1"/>
<evidence type="ECO:0000250" key="2">
    <source>
        <dbReference type="UniProtKB" id="P0AB89"/>
    </source>
</evidence>
<evidence type="ECO:0000305" key="3"/>
<dbReference type="EC" id="4.3.2.2" evidence="2"/>
<dbReference type="EMBL" id="AE016826">
    <property type="protein sequence ID" value="AAO26971.1"/>
    <property type="molecule type" value="Genomic_DNA"/>
</dbReference>
<dbReference type="RefSeq" id="WP_011091372.1">
    <property type="nucleotide sequence ID" value="NC_004545.1"/>
</dbReference>
<dbReference type="SMR" id="Q89AM3"/>
<dbReference type="STRING" id="224915.bbp_244"/>
<dbReference type="KEGG" id="bab:bbp_244"/>
<dbReference type="eggNOG" id="COG0015">
    <property type="taxonomic scope" value="Bacteria"/>
</dbReference>
<dbReference type="HOGENOM" id="CLU_025566_2_0_6"/>
<dbReference type="OrthoDB" id="9768878at2"/>
<dbReference type="UniPathway" id="UPA00074">
    <property type="reaction ID" value="UER00132"/>
</dbReference>
<dbReference type="UniPathway" id="UPA00075">
    <property type="reaction ID" value="UER00336"/>
</dbReference>
<dbReference type="Proteomes" id="UP000000601">
    <property type="component" value="Chromosome"/>
</dbReference>
<dbReference type="GO" id="GO:0005829">
    <property type="term" value="C:cytosol"/>
    <property type="evidence" value="ECO:0007669"/>
    <property type="project" value="TreeGrafter"/>
</dbReference>
<dbReference type="GO" id="GO:0070626">
    <property type="term" value="F:(S)-2-(5-amino-1-(5-phospho-D-ribosyl)imidazole-4-carboxamido) succinate lyase (fumarate-forming) activity"/>
    <property type="evidence" value="ECO:0007669"/>
    <property type="project" value="RHEA"/>
</dbReference>
<dbReference type="GO" id="GO:0004018">
    <property type="term" value="F:N6-(1,2-dicarboxyethyl)AMP AMP-lyase (fumarate-forming) activity"/>
    <property type="evidence" value="ECO:0007669"/>
    <property type="project" value="InterPro"/>
</dbReference>
<dbReference type="GO" id="GO:0044208">
    <property type="term" value="P:'de novo' AMP biosynthetic process"/>
    <property type="evidence" value="ECO:0007669"/>
    <property type="project" value="UniProtKB-UniPathway"/>
</dbReference>
<dbReference type="GO" id="GO:0006189">
    <property type="term" value="P:'de novo' IMP biosynthetic process"/>
    <property type="evidence" value="ECO:0007669"/>
    <property type="project" value="UniProtKB-UniPathway"/>
</dbReference>
<dbReference type="CDD" id="cd01598">
    <property type="entry name" value="PurB"/>
    <property type="match status" value="1"/>
</dbReference>
<dbReference type="FunFam" id="1.20.200.10:FF:000004">
    <property type="entry name" value="Adenylosuccinate lyase"/>
    <property type="match status" value="1"/>
</dbReference>
<dbReference type="Gene3D" id="1.10.40.30">
    <property type="entry name" value="Fumarase/aspartase (C-terminal domain)"/>
    <property type="match status" value="1"/>
</dbReference>
<dbReference type="Gene3D" id="1.20.200.10">
    <property type="entry name" value="Fumarase/aspartase (Central domain)"/>
    <property type="match status" value="1"/>
</dbReference>
<dbReference type="Gene3D" id="1.10.275.10">
    <property type="entry name" value="Fumarase/aspartase (N-terminal domain)"/>
    <property type="match status" value="1"/>
</dbReference>
<dbReference type="InterPro" id="IPR024083">
    <property type="entry name" value="Fumarase/histidase_N"/>
</dbReference>
<dbReference type="InterPro" id="IPR020557">
    <property type="entry name" value="Fumarate_lyase_CS"/>
</dbReference>
<dbReference type="InterPro" id="IPR000362">
    <property type="entry name" value="Fumarate_lyase_fam"/>
</dbReference>
<dbReference type="InterPro" id="IPR022761">
    <property type="entry name" value="Fumarate_lyase_N"/>
</dbReference>
<dbReference type="InterPro" id="IPR008948">
    <property type="entry name" value="L-Aspartase-like"/>
</dbReference>
<dbReference type="InterPro" id="IPR004769">
    <property type="entry name" value="Pur_lyase"/>
</dbReference>
<dbReference type="InterPro" id="IPR047136">
    <property type="entry name" value="PurB_bact"/>
</dbReference>
<dbReference type="InterPro" id="IPR013539">
    <property type="entry name" value="PurB_C"/>
</dbReference>
<dbReference type="NCBIfam" id="NF006764">
    <property type="entry name" value="PRK09285.1"/>
    <property type="match status" value="1"/>
</dbReference>
<dbReference type="NCBIfam" id="TIGR00928">
    <property type="entry name" value="purB"/>
    <property type="match status" value="1"/>
</dbReference>
<dbReference type="PANTHER" id="PTHR43411">
    <property type="entry name" value="ADENYLOSUCCINATE LYASE"/>
    <property type="match status" value="1"/>
</dbReference>
<dbReference type="PANTHER" id="PTHR43411:SF1">
    <property type="entry name" value="ADENYLOSUCCINATE LYASE"/>
    <property type="match status" value="1"/>
</dbReference>
<dbReference type="Pfam" id="PF08328">
    <property type="entry name" value="ASL_C"/>
    <property type="match status" value="1"/>
</dbReference>
<dbReference type="Pfam" id="PF00206">
    <property type="entry name" value="Lyase_1"/>
    <property type="match status" value="1"/>
</dbReference>
<dbReference type="PRINTS" id="PR00149">
    <property type="entry name" value="FUMRATELYASE"/>
</dbReference>
<dbReference type="SUPFAM" id="SSF48557">
    <property type="entry name" value="L-aspartase-like"/>
    <property type="match status" value="1"/>
</dbReference>
<dbReference type="PROSITE" id="PS00163">
    <property type="entry name" value="FUMARATE_LYASES"/>
    <property type="match status" value="1"/>
</dbReference>
<organism>
    <name type="scientific">Buchnera aphidicola subsp. Baizongia pistaciae (strain Bp)</name>
    <dbReference type="NCBI Taxonomy" id="224915"/>
    <lineage>
        <taxon>Bacteria</taxon>
        <taxon>Pseudomonadati</taxon>
        <taxon>Pseudomonadota</taxon>
        <taxon>Gammaproteobacteria</taxon>
        <taxon>Enterobacterales</taxon>
        <taxon>Erwiniaceae</taxon>
        <taxon>Buchnera</taxon>
    </lineage>
</organism>
<sequence length="460" mass="53165">MIASPLFAISPIDGRYSSKVIKLRNIFSEYAFLKFRVTIELLWLKKISLLQEFKIVYNKDVLNCLDRIIDNFSKKDALEIKILEKKTNHDVKSIEYFLQKKIFKCLGNHDILGLVHFGCTSEDINNLAYALMLKVSRRDIILPLWNKIIFEIKKIALLHHNVPMLSRTHGQPATPSTIGKELINFAYRLERQLKQFKNIEILGKINGSTGNYNALHFSHSSVDWHKISQEFVTSLGLFWNPYTTQIEPHDFISEFFSCLARVNTILINFNRDIWGYISLQYFNQTPKLDEIGSSVMPHKINPIDFENSEGNLGLSNAIISHLIEKLPISRWQRDLSDSTVLRNVGTVIAYSIIAYDSIILGLKKLKVNTSRLLQDLNHHWEILAEPIQTVMRKYGINDTYNELKNITRGKRVTSDIILKYVNSLKIPRNEKEKLLQLTPENYLGLSSKLVKIFNNSSELK</sequence>
<comment type="function">
    <text evidence="2">Catalyzes two reactions in de novo purine nucleotide biosynthesis. Catalyzes the breakdown of 5-aminoimidazole- (N-succinylocarboxamide) ribotide (SAICAR or 2-[5-amino-1-(5-phospho-beta-D-ribosyl)imidazole-4-carboxamido]succinate) to 5-aminoimidazole-4-carboxamide ribotide (AICAR or 5-amino-1-(5-phospho-beta-D-ribosyl)imidazole-4-carboxamide) and fumarate, and of adenylosuccinate (ADS or N(6)-(1,2-dicarboxyethyl)-AMP) to adenosine monophosphate (AMP) and fumarate.</text>
</comment>
<comment type="catalytic activity">
    <reaction evidence="2">
        <text>N(6)-(1,2-dicarboxyethyl)-AMP = fumarate + AMP</text>
        <dbReference type="Rhea" id="RHEA:16853"/>
        <dbReference type="ChEBI" id="CHEBI:29806"/>
        <dbReference type="ChEBI" id="CHEBI:57567"/>
        <dbReference type="ChEBI" id="CHEBI:456215"/>
        <dbReference type="EC" id="4.3.2.2"/>
    </reaction>
    <physiologicalReaction direction="left-to-right" evidence="2">
        <dbReference type="Rhea" id="RHEA:16854"/>
    </physiologicalReaction>
</comment>
<comment type="catalytic activity">
    <reaction evidence="2">
        <text>(2S)-2-[5-amino-1-(5-phospho-beta-D-ribosyl)imidazole-4-carboxamido]succinate = 5-amino-1-(5-phospho-beta-D-ribosyl)imidazole-4-carboxamide + fumarate</text>
        <dbReference type="Rhea" id="RHEA:23920"/>
        <dbReference type="ChEBI" id="CHEBI:29806"/>
        <dbReference type="ChEBI" id="CHEBI:58443"/>
        <dbReference type="ChEBI" id="CHEBI:58475"/>
        <dbReference type="EC" id="4.3.2.2"/>
    </reaction>
    <physiologicalReaction direction="left-to-right" evidence="2">
        <dbReference type="Rhea" id="RHEA:23921"/>
    </physiologicalReaction>
</comment>
<comment type="pathway">
    <text>Purine metabolism; AMP biosynthesis via de novo pathway; AMP from IMP: step 2/2.</text>
</comment>
<comment type="pathway">
    <text>Purine metabolism; IMP biosynthesis via de novo pathway; 5-amino-1-(5-phospho-D-ribosyl)imidazole-4-carboxamide from 5-amino-1-(5-phospho-D-ribosyl)imidazole-4-carboxylate: step 2/2.</text>
</comment>
<comment type="subunit">
    <text evidence="1">Homotetramer. Residues from neighboring subunits contribute catalytic and substrate-binding residues to each active site (By similarity).</text>
</comment>
<comment type="similarity">
    <text evidence="3">Belongs to the lyase 1 family. Adenylosuccinate lyase subfamily.</text>
</comment>
<gene>
    <name type="primary">purB</name>
    <name type="ordered locus">bbp_244</name>
</gene>